<gene>
    <name evidence="1" type="primary">ispE</name>
    <name type="ordered locus">SbBS512_E1372</name>
</gene>
<name>ISPE_SHIB3</name>
<accession>B2TZV6</accession>
<dbReference type="EC" id="2.7.1.148" evidence="1"/>
<dbReference type="EMBL" id="CP001063">
    <property type="protein sequence ID" value="ACD08910.1"/>
    <property type="molecule type" value="Genomic_DNA"/>
</dbReference>
<dbReference type="RefSeq" id="WP_001260333.1">
    <property type="nucleotide sequence ID" value="NC_010658.1"/>
</dbReference>
<dbReference type="SMR" id="B2TZV6"/>
<dbReference type="STRING" id="344609.SbBS512_E1372"/>
<dbReference type="GeneID" id="93775273"/>
<dbReference type="KEGG" id="sbc:SbBS512_E1372"/>
<dbReference type="HOGENOM" id="CLU_053057_3_0_6"/>
<dbReference type="UniPathway" id="UPA00056">
    <property type="reaction ID" value="UER00094"/>
</dbReference>
<dbReference type="Proteomes" id="UP000001030">
    <property type="component" value="Chromosome"/>
</dbReference>
<dbReference type="GO" id="GO:0050515">
    <property type="term" value="F:4-(cytidine 5'-diphospho)-2-C-methyl-D-erythritol kinase activity"/>
    <property type="evidence" value="ECO:0007669"/>
    <property type="project" value="UniProtKB-UniRule"/>
</dbReference>
<dbReference type="GO" id="GO:0005524">
    <property type="term" value="F:ATP binding"/>
    <property type="evidence" value="ECO:0007669"/>
    <property type="project" value="UniProtKB-UniRule"/>
</dbReference>
<dbReference type="GO" id="GO:0019288">
    <property type="term" value="P:isopentenyl diphosphate biosynthetic process, methylerythritol 4-phosphate pathway"/>
    <property type="evidence" value="ECO:0007669"/>
    <property type="project" value="UniProtKB-UniRule"/>
</dbReference>
<dbReference type="GO" id="GO:0016114">
    <property type="term" value="P:terpenoid biosynthetic process"/>
    <property type="evidence" value="ECO:0007669"/>
    <property type="project" value="InterPro"/>
</dbReference>
<dbReference type="FunFam" id="3.30.230.10:FF:000022">
    <property type="entry name" value="4-diphosphocytidyl-2-C-methyl-D-erythritol kinase"/>
    <property type="match status" value="1"/>
</dbReference>
<dbReference type="FunFam" id="3.30.70.890:FF:000004">
    <property type="entry name" value="4-diphosphocytidyl-2-C-methyl-D-erythritol kinase"/>
    <property type="match status" value="1"/>
</dbReference>
<dbReference type="Gene3D" id="3.30.230.10">
    <property type="match status" value="1"/>
</dbReference>
<dbReference type="Gene3D" id="3.30.70.890">
    <property type="entry name" value="GHMP kinase, C-terminal domain"/>
    <property type="match status" value="1"/>
</dbReference>
<dbReference type="HAMAP" id="MF_00061">
    <property type="entry name" value="IspE"/>
    <property type="match status" value="1"/>
</dbReference>
<dbReference type="InterPro" id="IPR013750">
    <property type="entry name" value="GHMP_kinase_C_dom"/>
</dbReference>
<dbReference type="InterPro" id="IPR036554">
    <property type="entry name" value="GHMP_kinase_C_sf"/>
</dbReference>
<dbReference type="InterPro" id="IPR006204">
    <property type="entry name" value="GHMP_kinase_N_dom"/>
</dbReference>
<dbReference type="InterPro" id="IPR004424">
    <property type="entry name" value="IspE"/>
</dbReference>
<dbReference type="InterPro" id="IPR020568">
    <property type="entry name" value="Ribosomal_Su5_D2-typ_SF"/>
</dbReference>
<dbReference type="InterPro" id="IPR014721">
    <property type="entry name" value="Ribsml_uS5_D2-typ_fold_subgr"/>
</dbReference>
<dbReference type="NCBIfam" id="TIGR00154">
    <property type="entry name" value="ispE"/>
    <property type="match status" value="1"/>
</dbReference>
<dbReference type="PANTHER" id="PTHR43527">
    <property type="entry name" value="4-DIPHOSPHOCYTIDYL-2-C-METHYL-D-ERYTHRITOL KINASE, CHLOROPLASTIC"/>
    <property type="match status" value="1"/>
</dbReference>
<dbReference type="PANTHER" id="PTHR43527:SF2">
    <property type="entry name" value="4-DIPHOSPHOCYTIDYL-2-C-METHYL-D-ERYTHRITOL KINASE, CHLOROPLASTIC"/>
    <property type="match status" value="1"/>
</dbReference>
<dbReference type="Pfam" id="PF08544">
    <property type="entry name" value="GHMP_kinases_C"/>
    <property type="match status" value="1"/>
</dbReference>
<dbReference type="Pfam" id="PF00288">
    <property type="entry name" value="GHMP_kinases_N"/>
    <property type="match status" value="1"/>
</dbReference>
<dbReference type="PIRSF" id="PIRSF010376">
    <property type="entry name" value="IspE"/>
    <property type="match status" value="1"/>
</dbReference>
<dbReference type="SUPFAM" id="SSF55060">
    <property type="entry name" value="GHMP Kinase, C-terminal domain"/>
    <property type="match status" value="1"/>
</dbReference>
<dbReference type="SUPFAM" id="SSF54211">
    <property type="entry name" value="Ribosomal protein S5 domain 2-like"/>
    <property type="match status" value="1"/>
</dbReference>
<proteinExistence type="inferred from homology"/>
<sequence length="283" mass="30953">MRTQWPSPAKLNLFLYITGQRADGYHTLQTLFQFLDYGDTISIELRDDGDIRLLTPVEGVEHEDNLIVRAARLLMKTAADSGRLPTGSGANISIDKRLPMGGGLGGGSSNAATVLVALNHLWQCGLSMDELAEMGLTLGADVPVFVRGHAAFAEGVGEILTPVDPPEKWYLVAHPGVSIPTPVIFKDPELPRNTPKRSIETLLKCEFSNDCEVIARKRFREVDAVLSWLLEYAPSRLTGTGACVFAEFDTESEARQVLEQAPEWLNGFVAKGVNLSPLHRAML</sequence>
<feature type="chain" id="PRO_1000092116" description="4-diphosphocytidyl-2-C-methyl-D-erythritol kinase">
    <location>
        <begin position="1"/>
        <end position="283"/>
    </location>
</feature>
<feature type="active site" evidence="1">
    <location>
        <position position="10"/>
    </location>
</feature>
<feature type="active site" evidence="1">
    <location>
        <position position="141"/>
    </location>
</feature>
<feature type="binding site" evidence="1">
    <location>
        <begin position="99"/>
        <end position="109"/>
    </location>
    <ligand>
        <name>ATP</name>
        <dbReference type="ChEBI" id="CHEBI:30616"/>
    </ligand>
</feature>
<protein>
    <recommendedName>
        <fullName evidence="1">4-diphosphocytidyl-2-C-methyl-D-erythritol kinase</fullName>
        <shortName evidence="1">CMK</shortName>
        <ecNumber evidence="1">2.7.1.148</ecNumber>
    </recommendedName>
    <alternativeName>
        <fullName evidence="1">4-(cytidine-5'-diphospho)-2-C-methyl-D-erythritol kinase</fullName>
    </alternativeName>
</protein>
<comment type="function">
    <text evidence="1">Catalyzes the phosphorylation of the position 2 hydroxy group of 4-diphosphocytidyl-2C-methyl-D-erythritol.</text>
</comment>
<comment type="catalytic activity">
    <reaction evidence="1">
        <text>4-CDP-2-C-methyl-D-erythritol + ATP = 4-CDP-2-C-methyl-D-erythritol 2-phosphate + ADP + H(+)</text>
        <dbReference type="Rhea" id="RHEA:18437"/>
        <dbReference type="ChEBI" id="CHEBI:15378"/>
        <dbReference type="ChEBI" id="CHEBI:30616"/>
        <dbReference type="ChEBI" id="CHEBI:57823"/>
        <dbReference type="ChEBI" id="CHEBI:57919"/>
        <dbReference type="ChEBI" id="CHEBI:456216"/>
        <dbReference type="EC" id="2.7.1.148"/>
    </reaction>
</comment>
<comment type="pathway">
    <text evidence="1">Isoprenoid biosynthesis; isopentenyl diphosphate biosynthesis via DXP pathway; isopentenyl diphosphate from 1-deoxy-D-xylulose 5-phosphate: step 3/6.</text>
</comment>
<comment type="subunit">
    <text evidence="1">Homodimer.</text>
</comment>
<comment type="similarity">
    <text evidence="1">Belongs to the GHMP kinase family. IspE subfamily.</text>
</comment>
<keyword id="KW-0067">ATP-binding</keyword>
<keyword id="KW-0414">Isoprene biosynthesis</keyword>
<keyword id="KW-0418">Kinase</keyword>
<keyword id="KW-0547">Nucleotide-binding</keyword>
<keyword id="KW-1185">Reference proteome</keyword>
<keyword id="KW-0808">Transferase</keyword>
<organism>
    <name type="scientific">Shigella boydii serotype 18 (strain CDC 3083-94 / BS512)</name>
    <dbReference type="NCBI Taxonomy" id="344609"/>
    <lineage>
        <taxon>Bacteria</taxon>
        <taxon>Pseudomonadati</taxon>
        <taxon>Pseudomonadota</taxon>
        <taxon>Gammaproteobacteria</taxon>
        <taxon>Enterobacterales</taxon>
        <taxon>Enterobacteriaceae</taxon>
        <taxon>Shigella</taxon>
    </lineage>
</organism>
<reference key="1">
    <citation type="submission" date="2008-05" db="EMBL/GenBank/DDBJ databases">
        <title>Complete sequence of Shigella boydii serotype 18 strain BS512.</title>
        <authorList>
            <person name="Rasko D.A."/>
            <person name="Rosovitz M."/>
            <person name="Maurelli A.T."/>
            <person name="Myers G."/>
            <person name="Seshadri R."/>
            <person name="Cer R."/>
            <person name="Jiang L."/>
            <person name="Ravel J."/>
            <person name="Sebastian Y."/>
        </authorList>
    </citation>
    <scope>NUCLEOTIDE SEQUENCE [LARGE SCALE GENOMIC DNA]</scope>
    <source>
        <strain>CDC 3083-94 / BS512</strain>
    </source>
</reference>
<evidence type="ECO:0000255" key="1">
    <source>
        <dbReference type="HAMAP-Rule" id="MF_00061"/>
    </source>
</evidence>